<keyword id="KW-0414">Isoprene biosynthesis</keyword>
<keyword id="KW-0460">Magnesium</keyword>
<keyword id="KW-0479">Metal-binding</keyword>
<keyword id="KW-0784">Thiamine biosynthesis</keyword>
<keyword id="KW-0786">Thiamine pyrophosphate</keyword>
<keyword id="KW-0808">Transferase</keyword>
<feature type="chain" id="PRO_1000115747" description="1-deoxy-D-xylulose-5-phosphate synthase">
    <location>
        <begin position="1"/>
        <end position="620"/>
    </location>
</feature>
<feature type="binding site" evidence="1">
    <location>
        <position position="80"/>
    </location>
    <ligand>
        <name>thiamine diphosphate</name>
        <dbReference type="ChEBI" id="CHEBI:58937"/>
    </ligand>
</feature>
<feature type="binding site" evidence="1">
    <location>
        <begin position="121"/>
        <end position="123"/>
    </location>
    <ligand>
        <name>thiamine diphosphate</name>
        <dbReference type="ChEBI" id="CHEBI:58937"/>
    </ligand>
</feature>
<feature type="binding site" evidence="1">
    <location>
        <position position="152"/>
    </location>
    <ligand>
        <name>Mg(2+)</name>
        <dbReference type="ChEBI" id="CHEBI:18420"/>
    </ligand>
</feature>
<feature type="binding site" evidence="1">
    <location>
        <begin position="153"/>
        <end position="154"/>
    </location>
    <ligand>
        <name>thiamine diphosphate</name>
        <dbReference type="ChEBI" id="CHEBI:58937"/>
    </ligand>
</feature>
<feature type="binding site" evidence="1">
    <location>
        <position position="181"/>
    </location>
    <ligand>
        <name>Mg(2+)</name>
        <dbReference type="ChEBI" id="CHEBI:18420"/>
    </ligand>
</feature>
<feature type="binding site" evidence="1">
    <location>
        <position position="181"/>
    </location>
    <ligand>
        <name>thiamine diphosphate</name>
        <dbReference type="ChEBI" id="CHEBI:58937"/>
    </ligand>
</feature>
<feature type="binding site" evidence="1">
    <location>
        <position position="288"/>
    </location>
    <ligand>
        <name>thiamine diphosphate</name>
        <dbReference type="ChEBI" id="CHEBI:58937"/>
    </ligand>
</feature>
<feature type="binding site" evidence="1">
    <location>
        <position position="370"/>
    </location>
    <ligand>
        <name>thiamine diphosphate</name>
        <dbReference type="ChEBI" id="CHEBI:58937"/>
    </ligand>
</feature>
<comment type="function">
    <text evidence="1">Catalyzes the acyloin condensation reaction between C atoms 2 and 3 of pyruvate and glyceraldehyde 3-phosphate to yield 1-deoxy-D-xylulose-5-phosphate (DXP).</text>
</comment>
<comment type="catalytic activity">
    <reaction evidence="1">
        <text>D-glyceraldehyde 3-phosphate + pyruvate + H(+) = 1-deoxy-D-xylulose 5-phosphate + CO2</text>
        <dbReference type="Rhea" id="RHEA:12605"/>
        <dbReference type="ChEBI" id="CHEBI:15361"/>
        <dbReference type="ChEBI" id="CHEBI:15378"/>
        <dbReference type="ChEBI" id="CHEBI:16526"/>
        <dbReference type="ChEBI" id="CHEBI:57792"/>
        <dbReference type="ChEBI" id="CHEBI:59776"/>
        <dbReference type="EC" id="2.2.1.7"/>
    </reaction>
</comment>
<comment type="cofactor">
    <cofactor evidence="1">
        <name>Mg(2+)</name>
        <dbReference type="ChEBI" id="CHEBI:18420"/>
    </cofactor>
    <text evidence="1">Binds 1 Mg(2+) ion per subunit.</text>
</comment>
<comment type="cofactor">
    <cofactor evidence="1">
        <name>thiamine diphosphate</name>
        <dbReference type="ChEBI" id="CHEBI:58937"/>
    </cofactor>
    <text evidence="1">Binds 1 thiamine pyrophosphate per subunit.</text>
</comment>
<comment type="pathway">
    <text evidence="1">Metabolic intermediate biosynthesis; 1-deoxy-D-xylulose 5-phosphate biosynthesis; 1-deoxy-D-xylulose 5-phosphate from D-glyceraldehyde 3-phosphate and pyruvate: step 1/1.</text>
</comment>
<comment type="subunit">
    <text evidence="1">Homodimer.</text>
</comment>
<comment type="similarity">
    <text evidence="1">Belongs to the transketolase family. DXPS subfamily.</text>
</comment>
<reference key="1">
    <citation type="journal article" date="2008" name="PLoS Genet.">
        <title>Complete genome sequence of the N2-fixing broad host range endophyte Klebsiella pneumoniae 342 and virulence predictions verified in mice.</title>
        <authorList>
            <person name="Fouts D.E."/>
            <person name="Tyler H.L."/>
            <person name="DeBoy R.T."/>
            <person name="Daugherty S."/>
            <person name="Ren Q."/>
            <person name="Badger J.H."/>
            <person name="Durkin A.S."/>
            <person name="Huot H."/>
            <person name="Shrivastava S."/>
            <person name="Kothari S."/>
            <person name="Dodson R.J."/>
            <person name="Mohamoud Y."/>
            <person name="Khouri H."/>
            <person name="Roesch L.F.W."/>
            <person name="Krogfelt K.A."/>
            <person name="Struve C."/>
            <person name="Triplett E.W."/>
            <person name="Methe B.A."/>
        </authorList>
    </citation>
    <scope>NUCLEOTIDE SEQUENCE [LARGE SCALE GENOMIC DNA]</scope>
    <source>
        <strain>342</strain>
    </source>
</reference>
<gene>
    <name evidence="1" type="primary">dxs</name>
    <name type="ordered locus">KPK_4312</name>
</gene>
<dbReference type="EC" id="2.2.1.7" evidence="1"/>
<dbReference type="EMBL" id="CP000964">
    <property type="protein sequence ID" value="ACI10567.1"/>
    <property type="molecule type" value="Genomic_DNA"/>
</dbReference>
<dbReference type="SMR" id="B5Y0X1"/>
<dbReference type="KEGG" id="kpe:KPK_4312"/>
<dbReference type="HOGENOM" id="CLU_009227_1_4_6"/>
<dbReference type="UniPathway" id="UPA00064">
    <property type="reaction ID" value="UER00091"/>
</dbReference>
<dbReference type="Proteomes" id="UP000001734">
    <property type="component" value="Chromosome"/>
</dbReference>
<dbReference type="GO" id="GO:0005829">
    <property type="term" value="C:cytosol"/>
    <property type="evidence" value="ECO:0007669"/>
    <property type="project" value="TreeGrafter"/>
</dbReference>
<dbReference type="GO" id="GO:0008661">
    <property type="term" value="F:1-deoxy-D-xylulose-5-phosphate synthase activity"/>
    <property type="evidence" value="ECO:0007669"/>
    <property type="project" value="UniProtKB-UniRule"/>
</dbReference>
<dbReference type="GO" id="GO:0000287">
    <property type="term" value="F:magnesium ion binding"/>
    <property type="evidence" value="ECO:0007669"/>
    <property type="project" value="UniProtKB-UniRule"/>
</dbReference>
<dbReference type="GO" id="GO:0030976">
    <property type="term" value="F:thiamine pyrophosphate binding"/>
    <property type="evidence" value="ECO:0007669"/>
    <property type="project" value="UniProtKB-UniRule"/>
</dbReference>
<dbReference type="GO" id="GO:0052865">
    <property type="term" value="P:1-deoxy-D-xylulose 5-phosphate biosynthetic process"/>
    <property type="evidence" value="ECO:0007669"/>
    <property type="project" value="UniProtKB-UniPathway"/>
</dbReference>
<dbReference type="GO" id="GO:0019288">
    <property type="term" value="P:isopentenyl diphosphate biosynthetic process, methylerythritol 4-phosphate pathway"/>
    <property type="evidence" value="ECO:0007669"/>
    <property type="project" value="TreeGrafter"/>
</dbReference>
<dbReference type="GO" id="GO:0016114">
    <property type="term" value="P:terpenoid biosynthetic process"/>
    <property type="evidence" value="ECO:0007669"/>
    <property type="project" value="UniProtKB-UniRule"/>
</dbReference>
<dbReference type="GO" id="GO:0009228">
    <property type="term" value="P:thiamine biosynthetic process"/>
    <property type="evidence" value="ECO:0007669"/>
    <property type="project" value="UniProtKB-UniRule"/>
</dbReference>
<dbReference type="CDD" id="cd02007">
    <property type="entry name" value="TPP_DXS"/>
    <property type="match status" value="1"/>
</dbReference>
<dbReference type="CDD" id="cd07033">
    <property type="entry name" value="TPP_PYR_DXS_TK_like"/>
    <property type="match status" value="1"/>
</dbReference>
<dbReference type="FunFam" id="3.40.50.920:FF:000002">
    <property type="entry name" value="1-deoxy-D-xylulose-5-phosphate synthase"/>
    <property type="match status" value="1"/>
</dbReference>
<dbReference type="FunFam" id="3.40.50.970:FF:000005">
    <property type="entry name" value="1-deoxy-D-xylulose-5-phosphate synthase"/>
    <property type="match status" value="1"/>
</dbReference>
<dbReference type="Gene3D" id="3.40.50.920">
    <property type="match status" value="1"/>
</dbReference>
<dbReference type="Gene3D" id="3.40.50.970">
    <property type="match status" value="2"/>
</dbReference>
<dbReference type="HAMAP" id="MF_00315">
    <property type="entry name" value="DXP_synth"/>
    <property type="match status" value="1"/>
</dbReference>
<dbReference type="InterPro" id="IPR005477">
    <property type="entry name" value="Dxylulose-5-P_synthase"/>
</dbReference>
<dbReference type="InterPro" id="IPR029061">
    <property type="entry name" value="THDP-binding"/>
</dbReference>
<dbReference type="InterPro" id="IPR009014">
    <property type="entry name" value="Transketo_C/PFOR_II"/>
</dbReference>
<dbReference type="InterPro" id="IPR005475">
    <property type="entry name" value="Transketolase-like_Pyr-bd"/>
</dbReference>
<dbReference type="InterPro" id="IPR020826">
    <property type="entry name" value="Transketolase_BS"/>
</dbReference>
<dbReference type="InterPro" id="IPR033248">
    <property type="entry name" value="Transketolase_C"/>
</dbReference>
<dbReference type="InterPro" id="IPR049557">
    <property type="entry name" value="Transketolase_CS"/>
</dbReference>
<dbReference type="NCBIfam" id="TIGR00204">
    <property type="entry name" value="dxs"/>
    <property type="match status" value="1"/>
</dbReference>
<dbReference type="NCBIfam" id="NF003933">
    <property type="entry name" value="PRK05444.2-2"/>
    <property type="match status" value="1"/>
</dbReference>
<dbReference type="PANTHER" id="PTHR43322">
    <property type="entry name" value="1-D-DEOXYXYLULOSE 5-PHOSPHATE SYNTHASE-RELATED"/>
    <property type="match status" value="1"/>
</dbReference>
<dbReference type="PANTHER" id="PTHR43322:SF5">
    <property type="entry name" value="1-DEOXY-D-XYLULOSE-5-PHOSPHATE SYNTHASE, CHLOROPLASTIC"/>
    <property type="match status" value="1"/>
</dbReference>
<dbReference type="Pfam" id="PF13292">
    <property type="entry name" value="DXP_synthase_N"/>
    <property type="match status" value="1"/>
</dbReference>
<dbReference type="Pfam" id="PF02779">
    <property type="entry name" value="Transket_pyr"/>
    <property type="match status" value="1"/>
</dbReference>
<dbReference type="Pfam" id="PF02780">
    <property type="entry name" value="Transketolase_C"/>
    <property type="match status" value="1"/>
</dbReference>
<dbReference type="SMART" id="SM00861">
    <property type="entry name" value="Transket_pyr"/>
    <property type="match status" value="1"/>
</dbReference>
<dbReference type="SUPFAM" id="SSF52518">
    <property type="entry name" value="Thiamin diphosphate-binding fold (THDP-binding)"/>
    <property type="match status" value="2"/>
</dbReference>
<dbReference type="SUPFAM" id="SSF52922">
    <property type="entry name" value="TK C-terminal domain-like"/>
    <property type="match status" value="1"/>
</dbReference>
<dbReference type="PROSITE" id="PS00801">
    <property type="entry name" value="TRANSKETOLASE_1"/>
    <property type="match status" value="1"/>
</dbReference>
<dbReference type="PROSITE" id="PS00802">
    <property type="entry name" value="TRANSKETOLASE_2"/>
    <property type="match status" value="1"/>
</dbReference>
<protein>
    <recommendedName>
        <fullName evidence="1">1-deoxy-D-xylulose-5-phosphate synthase</fullName>
        <ecNumber evidence="1">2.2.1.7</ecNumber>
    </recommendedName>
    <alternativeName>
        <fullName evidence="1">1-deoxyxylulose-5-phosphate synthase</fullName>
        <shortName evidence="1">DXP synthase</shortName>
        <shortName evidence="1">DXPS</shortName>
    </alternativeName>
</protein>
<sequence>MSFDIAKYPTLALVDSTQELRLLPKESLPKLCDELRRYLLDSVSRSSGHFASGLGTVELTVALHYVYNTPFDRLIWDVGHQAYPHKILTGRRDKIGTIRQKGGLHPFPWRGESEYDVLSVGHSSTSISAGIGVAIAAAKEDKQRRAVCVIGDGAITAGMAFEAMNHAGDIKPDLLVVLNDNEMSISENVGALNNHLAQLLSGKLYSTLREGGKKVFSGVPPIKELLKRTEEHIKGMVVPGTLFEELGFNYIGPVDGHDVLGLVSTLKNMRDLKGPQFLHIMTKKGRGYEPAEKDPITFHAVPKFDHTSGVLPKSSGGLPSYSKIFGDWLCETAAKDSKLMAITPAMREGSGMVEFSKKFPDQYFDVAIAEQHAVTFAAGLAIGDYKPVVAIYSTFLQRAYDQVIHDVAIQKLPVLFAIDRAGIVGADGQTHQGAFDLSFLRCIPDMVVMTPSDENECRQMLHTGYHYSDGPCAVRYPRGSGTGATLEPLASLPIGKGVVKRQGEKIAILNFGTLLPEAAAVADKLNATLVDMRFVKPLDTALILQLAGEHDALVTLEENAIMGGAGSGVNEVLMAHRRAVPVLNIGLPDYFIPQGTQEEIRADLGLDAAGIEAKIHDWLA</sequence>
<accession>B5Y0X1</accession>
<proteinExistence type="inferred from homology"/>
<evidence type="ECO:0000255" key="1">
    <source>
        <dbReference type="HAMAP-Rule" id="MF_00315"/>
    </source>
</evidence>
<name>DXS_KLEP3</name>
<organism>
    <name type="scientific">Klebsiella pneumoniae (strain 342)</name>
    <dbReference type="NCBI Taxonomy" id="507522"/>
    <lineage>
        <taxon>Bacteria</taxon>
        <taxon>Pseudomonadati</taxon>
        <taxon>Pseudomonadota</taxon>
        <taxon>Gammaproteobacteria</taxon>
        <taxon>Enterobacterales</taxon>
        <taxon>Enterobacteriaceae</taxon>
        <taxon>Klebsiella/Raoultella group</taxon>
        <taxon>Klebsiella</taxon>
        <taxon>Klebsiella pneumoniae complex</taxon>
    </lineage>
</organism>